<gene>
    <name evidence="3" type="primary">lsc</name>
</gene>
<reference key="1">
    <citation type="journal article" date="1993" name="Physiol. Mol. Plant Pathol.">
        <title>Characterization and influence on virulence of the levansucrase gene from the fireblight pathogen Erwinia amylovora.</title>
        <authorList>
            <person name="Geier G."/>
            <person name="Geider K.K."/>
        </authorList>
        <dbReference type="AGRICOLA" id="IND20389464"/>
    </citation>
    <scope>NUCLEOTIDE SEQUENCE [GENOMIC DNA]</scope>
    <scope>FUNCTION</scope>
    <scope>CATALYTIC ACTIVITY</scope>
    <scope>SUBCELLULAR LOCATION</scope>
    <scope>DISRUPTION PHENOTYPE</scope>
    <source>
        <strain>EA7/74</strain>
    </source>
</reference>
<evidence type="ECO:0000250" key="1">
    <source>
        <dbReference type="UniProtKB" id="P05655"/>
    </source>
</evidence>
<evidence type="ECO:0000269" key="2">
    <source ref="1"/>
</evidence>
<evidence type="ECO:0000303" key="3">
    <source ref="1"/>
</evidence>
<evidence type="ECO:0000305" key="4"/>
<comment type="function">
    <text evidence="2">Catalyzes the synthesis of levan, a fructose polymer, by transferring the fructosyl moiety from sucrose to a growing acceptor molecule.</text>
</comment>
<comment type="catalytic activity">
    <reaction evidence="2">
        <text>[6)-beta-D-fructofuranosyl-(2-&gt;](n) alpha-D-glucopyranoside + sucrose = [6)-beta-D-fructofuranosyl-(2-&gt;](n+1) alpha-D-glucopyranoside + D-glucose</text>
        <dbReference type="Rhea" id="RHEA:13653"/>
        <dbReference type="Rhea" id="RHEA-COMP:13093"/>
        <dbReference type="Rhea" id="RHEA-COMP:13094"/>
        <dbReference type="ChEBI" id="CHEBI:4167"/>
        <dbReference type="ChEBI" id="CHEBI:17992"/>
        <dbReference type="ChEBI" id="CHEBI:134464"/>
        <dbReference type="EC" id="2.4.1.10"/>
    </reaction>
</comment>
<comment type="subcellular location">
    <subcellularLocation>
        <location evidence="2">Secreted</location>
    </subcellularLocation>
    <text evidence="2">It seems unlikely that a large signal peptide is cleaved off during transport (Ref.1). Localizes in the periplasm when expressed in E.coli (Ref.1).</text>
</comment>
<comment type="disruption phenotype">
    <text evidence="2">Mutant loses extracellular levansucrase activity and loses the ability to form the typical levan-containing, domed colony type on solid medium (Ref.1). Produces normal amounts of amylovoran (Ref.1). Disruption of the gene causes delayed development of necrotic virulence symptoms (Ref.1).</text>
</comment>
<comment type="similarity">
    <text evidence="4">Belongs to the glycosyl hydrolase 68 family.</text>
</comment>
<keyword id="KW-0119">Carbohydrate metabolism</keyword>
<keyword id="KW-0328">Glycosyltransferase</keyword>
<keyword id="KW-0964">Secreted</keyword>
<keyword id="KW-0808">Transferase</keyword>
<sequence>MSDYNYKPTLWTRADALKVHEDDPTTTQPVIDIAFPVMSEEVFIWDTMPLRDFDGEIISVNGWCIIFTLTADRNTDNPQFQDENGNYDITRDWEDRHGRARICYWYSRTGKDWIFGGRVMAEGVAPTTREWAGTPILLNDRGDIDLYYTCVTPGATIAKVRGKIVTSDQSVSLEGFQQVTSLFSADGTIYQTEEQNAFWNFRDPSPFIDRNDGKLYMLFEGNVAGPRGSHEITQAEMGNVPPGYEDVGGAKYQAGCVGLAVAKDLSGSEWQILPPLITAVGVNDQTERPHFVFQDGKYYLFTISHKYTFADNLTGPDGVYGFVSDKLTGPYTPMNSSGLVLGNPSSQPFQTYSHYVMPNGLVTSFIDSVPWKGKDYRIGGTEAPTVKILLKGDRSFIVDSFDYGYIPAMKDITLK</sequence>
<feature type="chain" id="PRO_0000057717" description="Levansucrase">
    <location>
        <begin position="1"/>
        <end position="415"/>
    </location>
</feature>
<feature type="active site" description="Nucleophile" evidence="1">
    <location>
        <position position="46"/>
    </location>
</feature>
<feature type="active site" description="Proton donor/acceptor" evidence="1">
    <location>
        <position position="287"/>
    </location>
</feature>
<feature type="binding site" evidence="1">
    <location>
        <position position="45"/>
    </location>
    <ligand>
        <name>sucrose</name>
        <dbReference type="ChEBI" id="CHEBI:17992"/>
    </ligand>
</feature>
<feature type="binding site" evidence="1">
    <location>
        <position position="46"/>
    </location>
    <ligand>
        <name>sucrose</name>
        <dbReference type="ChEBI" id="CHEBI:17992"/>
    </ligand>
</feature>
<feature type="binding site" evidence="1">
    <location>
        <position position="132"/>
    </location>
    <ligand>
        <name>sucrose</name>
        <dbReference type="ChEBI" id="CHEBI:17992"/>
    </ligand>
</feature>
<feature type="binding site" evidence="1">
    <location>
        <position position="202"/>
    </location>
    <ligand>
        <name>sucrose</name>
        <dbReference type="ChEBI" id="CHEBI:17992"/>
    </ligand>
</feature>
<feature type="binding site" evidence="1">
    <location>
        <position position="203"/>
    </location>
    <ligand>
        <name>sucrose</name>
        <dbReference type="ChEBI" id="CHEBI:17992"/>
    </ligand>
</feature>
<feature type="site" description="Transition state stabilizer" evidence="1">
    <location>
        <position position="203"/>
    </location>
</feature>
<dbReference type="EC" id="2.4.1.10" evidence="2"/>
<dbReference type="EMBL" id="X75079">
    <property type="protein sequence ID" value="CAA52972.1"/>
    <property type="molecule type" value="Genomic_DNA"/>
</dbReference>
<dbReference type="PIR" id="S39195">
    <property type="entry name" value="S39195"/>
</dbReference>
<dbReference type="SMR" id="Q46654"/>
<dbReference type="CAZy" id="GH68">
    <property type="family name" value="Glycoside Hydrolase Family 68"/>
</dbReference>
<dbReference type="BRENDA" id="2.4.1.10">
    <property type="organism ID" value="2136"/>
</dbReference>
<dbReference type="PHI-base" id="PHI:2472"/>
<dbReference type="GO" id="GO:0005576">
    <property type="term" value="C:extracellular region"/>
    <property type="evidence" value="ECO:0007669"/>
    <property type="project" value="UniProtKB-SubCell"/>
</dbReference>
<dbReference type="GO" id="GO:0050053">
    <property type="term" value="F:levansucrase activity"/>
    <property type="evidence" value="ECO:0007669"/>
    <property type="project" value="UniProtKB-EC"/>
</dbReference>
<dbReference type="GO" id="GO:0009758">
    <property type="term" value="P:carbohydrate utilization"/>
    <property type="evidence" value="ECO:0007669"/>
    <property type="project" value="InterPro"/>
</dbReference>
<dbReference type="CDD" id="cd08997">
    <property type="entry name" value="GH68"/>
    <property type="match status" value="1"/>
</dbReference>
<dbReference type="Gene3D" id="2.115.10.20">
    <property type="entry name" value="Glycosyl hydrolase domain, family 43"/>
    <property type="match status" value="1"/>
</dbReference>
<dbReference type="InterPro" id="IPR003469">
    <property type="entry name" value="Glyco_hydro_68"/>
</dbReference>
<dbReference type="InterPro" id="IPR023296">
    <property type="entry name" value="Glyco_hydro_beta-prop_sf"/>
</dbReference>
<dbReference type="Pfam" id="PF02435">
    <property type="entry name" value="Glyco_hydro_68"/>
    <property type="match status" value="1"/>
</dbReference>
<dbReference type="SUPFAM" id="SSF75005">
    <property type="entry name" value="Arabinanase/levansucrase/invertase"/>
    <property type="match status" value="1"/>
</dbReference>
<name>LSC_ERWAM</name>
<organism>
    <name type="scientific">Erwinia amylovora</name>
    <name type="common">Fire blight bacteria</name>
    <dbReference type="NCBI Taxonomy" id="552"/>
    <lineage>
        <taxon>Bacteria</taxon>
        <taxon>Pseudomonadati</taxon>
        <taxon>Pseudomonadota</taxon>
        <taxon>Gammaproteobacteria</taxon>
        <taxon>Enterobacterales</taxon>
        <taxon>Erwiniaceae</taxon>
        <taxon>Erwinia</taxon>
    </lineage>
</organism>
<proteinExistence type="evidence at protein level"/>
<accession>Q46654</accession>
<protein>
    <recommendedName>
        <fullName evidence="3">Levansucrase</fullName>
        <ecNumber evidence="2">2.4.1.10</ecNumber>
    </recommendedName>
    <alternativeName>
        <fullName>Beta-D-fructofuranosyl transferase</fullName>
    </alternativeName>
    <alternativeName>
        <fullName>Sucrose 6-fructosyl transferase</fullName>
    </alternativeName>
</protein>